<feature type="chain" id="PRO_0000254801" description="Cytochrome b">
    <location>
        <begin position="1"/>
        <end position="379"/>
    </location>
</feature>
<feature type="transmembrane region" description="Helical" evidence="2">
    <location>
        <begin position="33"/>
        <end position="53"/>
    </location>
</feature>
<feature type="transmembrane region" description="Helical" evidence="2">
    <location>
        <begin position="77"/>
        <end position="98"/>
    </location>
</feature>
<feature type="transmembrane region" description="Helical" evidence="2">
    <location>
        <begin position="113"/>
        <end position="133"/>
    </location>
</feature>
<feature type="transmembrane region" description="Helical" evidence="2">
    <location>
        <begin position="178"/>
        <end position="198"/>
    </location>
</feature>
<feature type="transmembrane region" description="Helical" evidence="2">
    <location>
        <begin position="226"/>
        <end position="246"/>
    </location>
</feature>
<feature type="transmembrane region" description="Helical" evidence="2">
    <location>
        <begin position="288"/>
        <end position="308"/>
    </location>
</feature>
<feature type="transmembrane region" description="Helical" evidence="2">
    <location>
        <begin position="320"/>
        <end position="340"/>
    </location>
</feature>
<feature type="transmembrane region" description="Helical" evidence="2">
    <location>
        <begin position="347"/>
        <end position="367"/>
    </location>
</feature>
<feature type="binding site" description="axial binding residue" evidence="2">
    <location>
        <position position="83"/>
    </location>
    <ligand>
        <name>heme b</name>
        <dbReference type="ChEBI" id="CHEBI:60344"/>
        <label>b562</label>
    </ligand>
    <ligandPart>
        <name>Fe</name>
        <dbReference type="ChEBI" id="CHEBI:18248"/>
    </ligandPart>
</feature>
<feature type="binding site" description="axial binding residue" evidence="2">
    <location>
        <position position="97"/>
    </location>
    <ligand>
        <name>heme b</name>
        <dbReference type="ChEBI" id="CHEBI:60344"/>
        <label>b566</label>
    </ligand>
    <ligandPart>
        <name>Fe</name>
        <dbReference type="ChEBI" id="CHEBI:18248"/>
    </ligandPart>
</feature>
<feature type="binding site" description="axial binding residue" evidence="2">
    <location>
        <position position="182"/>
    </location>
    <ligand>
        <name>heme b</name>
        <dbReference type="ChEBI" id="CHEBI:60344"/>
        <label>b562</label>
    </ligand>
    <ligandPart>
        <name>Fe</name>
        <dbReference type="ChEBI" id="CHEBI:18248"/>
    </ligandPart>
</feature>
<feature type="binding site" description="axial binding residue" evidence="2">
    <location>
        <position position="196"/>
    </location>
    <ligand>
        <name>heme b</name>
        <dbReference type="ChEBI" id="CHEBI:60344"/>
        <label>b566</label>
    </ligand>
    <ligandPart>
        <name>Fe</name>
        <dbReference type="ChEBI" id="CHEBI:18248"/>
    </ligandPart>
</feature>
<feature type="binding site" evidence="2">
    <location>
        <position position="201"/>
    </location>
    <ligand>
        <name>a ubiquinone</name>
        <dbReference type="ChEBI" id="CHEBI:16389"/>
    </ligand>
</feature>
<protein>
    <recommendedName>
        <fullName>Cytochrome b</fullName>
    </recommendedName>
    <alternativeName>
        <fullName>Complex III subunit 3</fullName>
    </alternativeName>
    <alternativeName>
        <fullName>Complex III subunit III</fullName>
    </alternativeName>
    <alternativeName>
        <fullName>Cytochrome b-c1 complex subunit 3</fullName>
    </alternativeName>
    <alternativeName>
        <fullName>Ubiquinol-cytochrome-c reductase complex cytochrome b subunit</fullName>
    </alternativeName>
</protein>
<reference key="1">
    <citation type="submission" date="2006-03" db="EMBL/GenBank/DDBJ databases">
        <title>Phylogenetic relationships of the enigmatic harpy fruit bat, Harpyionycteris (Mammalia: Chiroptera: Pteropodidae).</title>
        <authorList>
            <person name="Giannini N.P."/>
            <person name="Almeida F.C."/>
            <person name="DeSalle R."/>
            <person name="Simmons N.B."/>
        </authorList>
    </citation>
    <scope>NUCLEOTIDE SEQUENCE [GENOMIC DNA]</scope>
    <source>
        <strain>Isolate 7</strain>
    </source>
</reference>
<geneLocation type="mitochondrion"/>
<gene>
    <name type="primary">MT-CYB</name>
    <name type="synonym">COB</name>
    <name type="synonym">CYTB</name>
    <name type="synonym">MTCYB</name>
</gene>
<keyword id="KW-0249">Electron transport</keyword>
<keyword id="KW-0349">Heme</keyword>
<keyword id="KW-0408">Iron</keyword>
<keyword id="KW-0472">Membrane</keyword>
<keyword id="KW-0479">Metal-binding</keyword>
<keyword id="KW-0496">Mitochondrion</keyword>
<keyword id="KW-0999">Mitochondrion inner membrane</keyword>
<keyword id="KW-0679">Respiratory chain</keyword>
<keyword id="KW-0812">Transmembrane</keyword>
<keyword id="KW-1133">Transmembrane helix</keyword>
<keyword id="KW-0813">Transport</keyword>
<keyword id="KW-0830">Ubiquinone</keyword>
<accession>Q1PG54</accession>
<sequence>MTNIRKSHPLLKIINDSLIDLPAPSSISSWWNFGSLLGICLGIQILTGLFLAMHYTSDTATAFQSVTHICRDVNYGWILRYLHANGASMFFICLFLHVGRGLYYGSYIFMETWNVGILLLFAVMATAFMGYVLPWGQMSFWGATVITNLLSAIPYIGTNLVEWIWGGFSVDKATLTRFFAFHFLLPFIIAALVMVHLLFLHETGSNNPTGIPSDMDMIPFHPYYTIKDMLGALAMILVLLTLVLFSPDLLGDPDNYIPANPLNTPPHIKPEWYFLFAYAILRSIPNKLGGVLALVLSILILIFMPLLHTSKQRSMTFRPLSQCLFWLLVADLLTLTWIGGQPVEHPFIIIGQLASILYFSLILILMPFISIVENYLLKW</sequence>
<evidence type="ECO:0000250" key="1"/>
<evidence type="ECO:0000250" key="2">
    <source>
        <dbReference type="UniProtKB" id="P00157"/>
    </source>
</evidence>
<evidence type="ECO:0000255" key="3">
    <source>
        <dbReference type="PROSITE-ProRule" id="PRU00967"/>
    </source>
</evidence>
<evidence type="ECO:0000255" key="4">
    <source>
        <dbReference type="PROSITE-ProRule" id="PRU00968"/>
    </source>
</evidence>
<proteinExistence type="inferred from homology"/>
<comment type="function">
    <text evidence="2">Component of the ubiquinol-cytochrome c reductase complex (complex III or cytochrome b-c1 complex) that is part of the mitochondrial respiratory chain. The b-c1 complex mediates electron transfer from ubiquinol to cytochrome c. Contributes to the generation of a proton gradient across the mitochondrial membrane that is then used for ATP synthesis.</text>
</comment>
<comment type="cofactor">
    <cofactor evidence="2">
        <name>heme b</name>
        <dbReference type="ChEBI" id="CHEBI:60344"/>
    </cofactor>
    <text evidence="2">Binds 2 heme b groups non-covalently.</text>
</comment>
<comment type="subunit">
    <text evidence="2">The cytochrome bc1 complex contains 11 subunits: 3 respiratory subunits (MT-CYB, CYC1 and UQCRFS1), 2 core proteins (UQCRC1 and UQCRC2) and 6 low-molecular weight proteins (UQCRH/QCR6, UQCRB/QCR7, UQCRQ/QCR8, UQCR10/QCR9, UQCR11/QCR10 and a cleavage product of UQCRFS1). This cytochrome bc1 complex then forms a dimer.</text>
</comment>
<comment type="subcellular location">
    <subcellularLocation>
        <location evidence="2">Mitochondrion inner membrane</location>
        <topology evidence="2">Multi-pass membrane protein</topology>
    </subcellularLocation>
</comment>
<comment type="miscellaneous">
    <text evidence="1">Heme 1 (or BL or b562) is low-potential and absorbs at about 562 nm, and heme 2 (or BH or b566) is high-potential and absorbs at about 566 nm.</text>
</comment>
<comment type="similarity">
    <text evidence="3 4">Belongs to the cytochrome b family.</text>
</comment>
<comment type="caution">
    <text evidence="2">The full-length protein contains only eight transmembrane helices, not nine as predicted by bioinformatics tools.</text>
</comment>
<organism>
    <name type="scientific">Epomops franqueti</name>
    <name type="common">Franquet's epauletted fruit bat</name>
    <name type="synonym">Epomophorus franqueti</name>
    <dbReference type="NCBI Taxonomy" id="77231"/>
    <lineage>
        <taxon>Eukaryota</taxon>
        <taxon>Metazoa</taxon>
        <taxon>Chordata</taxon>
        <taxon>Craniata</taxon>
        <taxon>Vertebrata</taxon>
        <taxon>Euteleostomi</taxon>
        <taxon>Mammalia</taxon>
        <taxon>Eutheria</taxon>
        <taxon>Laurasiatheria</taxon>
        <taxon>Chiroptera</taxon>
        <taxon>Yinpterochiroptera</taxon>
        <taxon>Pteropodoidea</taxon>
        <taxon>Pteropodidae</taxon>
        <taxon>Epomophorinae</taxon>
        <taxon>Epomophorini</taxon>
        <taxon>Epomops</taxon>
    </lineage>
</organism>
<name>CYB_EPOFR</name>
<dbReference type="EMBL" id="DQ445707">
    <property type="protein sequence ID" value="ABE02427.1"/>
    <property type="molecule type" value="Genomic_DNA"/>
</dbReference>
<dbReference type="SMR" id="Q1PG54"/>
<dbReference type="GO" id="GO:0005743">
    <property type="term" value="C:mitochondrial inner membrane"/>
    <property type="evidence" value="ECO:0007669"/>
    <property type="project" value="UniProtKB-SubCell"/>
</dbReference>
<dbReference type="GO" id="GO:0045275">
    <property type="term" value="C:respiratory chain complex III"/>
    <property type="evidence" value="ECO:0007669"/>
    <property type="project" value="InterPro"/>
</dbReference>
<dbReference type="GO" id="GO:0046872">
    <property type="term" value="F:metal ion binding"/>
    <property type="evidence" value="ECO:0007669"/>
    <property type="project" value="UniProtKB-KW"/>
</dbReference>
<dbReference type="GO" id="GO:0008121">
    <property type="term" value="F:ubiquinol-cytochrome-c reductase activity"/>
    <property type="evidence" value="ECO:0007669"/>
    <property type="project" value="InterPro"/>
</dbReference>
<dbReference type="GO" id="GO:0006122">
    <property type="term" value="P:mitochondrial electron transport, ubiquinol to cytochrome c"/>
    <property type="evidence" value="ECO:0007669"/>
    <property type="project" value="TreeGrafter"/>
</dbReference>
<dbReference type="CDD" id="cd00290">
    <property type="entry name" value="cytochrome_b_C"/>
    <property type="match status" value="1"/>
</dbReference>
<dbReference type="CDD" id="cd00284">
    <property type="entry name" value="Cytochrome_b_N"/>
    <property type="match status" value="1"/>
</dbReference>
<dbReference type="FunFam" id="1.20.810.10:FF:000002">
    <property type="entry name" value="Cytochrome b"/>
    <property type="match status" value="1"/>
</dbReference>
<dbReference type="Gene3D" id="1.20.810.10">
    <property type="entry name" value="Cytochrome Bc1 Complex, Chain C"/>
    <property type="match status" value="1"/>
</dbReference>
<dbReference type="InterPro" id="IPR005798">
    <property type="entry name" value="Cyt_b/b6_C"/>
</dbReference>
<dbReference type="InterPro" id="IPR036150">
    <property type="entry name" value="Cyt_b/b6_C_sf"/>
</dbReference>
<dbReference type="InterPro" id="IPR005797">
    <property type="entry name" value="Cyt_b/b6_N"/>
</dbReference>
<dbReference type="InterPro" id="IPR027387">
    <property type="entry name" value="Cytb/b6-like_sf"/>
</dbReference>
<dbReference type="InterPro" id="IPR030689">
    <property type="entry name" value="Cytochrome_b"/>
</dbReference>
<dbReference type="InterPro" id="IPR048260">
    <property type="entry name" value="Cytochrome_b_C_euk/bac"/>
</dbReference>
<dbReference type="InterPro" id="IPR048259">
    <property type="entry name" value="Cytochrome_b_N_euk/bac"/>
</dbReference>
<dbReference type="InterPro" id="IPR016174">
    <property type="entry name" value="Di-haem_cyt_TM"/>
</dbReference>
<dbReference type="PANTHER" id="PTHR19271">
    <property type="entry name" value="CYTOCHROME B"/>
    <property type="match status" value="1"/>
</dbReference>
<dbReference type="PANTHER" id="PTHR19271:SF16">
    <property type="entry name" value="CYTOCHROME B"/>
    <property type="match status" value="1"/>
</dbReference>
<dbReference type="Pfam" id="PF00032">
    <property type="entry name" value="Cytochrom_B_C"/>
    <property type="match status" value="1"/>
</dbReference>
<dbReference type="Pfam" id="PF00033">
    <property type="entry name" value="Cytochrome_B"/>
    <property type="match status" value="1"/>
</dbReference>
<dbReference type="PIRSF" id="PIRSF038885">
    <property type="entry name" value="COB"/>
    <property type="match status" value="1"/>
</dbReference>
<dbReference type="SUPFAM" id="SSF81648">
    <property type="entry name" value="a domain/subunit of cytochrome bc1 complex (Ubiquinol-cytochrome c reductase)"/>
    <property type="match status" value="1"/>
</dbReference>
<dbReference type="SUPFAM" id="SSF81342">
    <property type="entry name" value="Transmembrane di-heme cytochromes"/>
    <property type="match status" value="1"/>
</dbReference>
<dbReference type="PROSITE" id="PS51003">
    <property type="entry name" value="CYTB_CTER"/>
    <property type="match status" value="1"/>
</dbReference>
<dbReference type="PROSITE" id="PS51002">
    <property type="entry name" value="CYTB_NTER"/>
    <property type="match status" value="1"/>
</dbReference>